<sequence length="193" mass="22300">MKLLIINNHDSFTFNLVDLIRKLNVPYDVLNVEDLKENTAENYSHILISPGPDIPRAYPQLFSMLEKYYQQKSILGVCLGHQTLCEFFGGTLYNLENVRHGQKRTLKVRSNSPLFFDLPTEFNIGLYHSWGVQEEDFPDCLEITALCDEDVVMAMQHKSLPIYSVQFHPESYMSDFGEKILRNWLAIPPTTNP</sequence>
<comment type="catalytic activity">
    <reaction>
        <text>chorismate + L-glutamine = anthranilate + pyruvate + L-glutamate + H(+)</text>
        <dbReference type="Rhea" id="RHEA:21732"/>
        <dbReference type="ChEBI" id="CHEBI:15361"/>
        <dbReference type="ChEBI" id="CHEBI:15378"/>
        <dbReference type="ChEBI" id="CHEBI:16567"/>
        <dbReference type="ChEBI" id="CHEBI:29748"/>
        <dbReference type="ChEBI" id="CHEBI:29985"/>
        <dbReference type="ChEBI" id="CHEBI:58359"/>
        <dbReference type="EC" id="4.1.3.27"/>
    </reaction>
</comment>
<comment type="pathway">
    <text>Amino-acid biosynthesis; L-tryptophan biosynthesis; L-tryptophan from chorismate: step 1/5.</text>
</comment>
<comment type="subunit">
    <text>Tetramer of two components I and two components II.</text>
</comment>
<organism>
    <name type="scientific">Haemophilus influenzae (strain ATCC 51907 / DSM 11121 / KW20 / Rd)</name>
    <dbReference type="NCBI Taxonomy" id="71421"/>
    <lineage>
        <taxon>Bacteria</taxon>
        <taxon>Pseudomonadati</taxon>
        <taxon>Pseudomonadota</taxon>
        <taxon>Gammaproteobacteria</taxon>
        <taxon>Pasteurellales</taxon>
        <taxon>Pasteurellaceae</taxon>
        <taxon>Haemophilus</taxon>
    </lineage>
</organism>
<proteinExistence type="predicted"/>
<accession>P44339</accession>
<protein>
    <recommendedName>
        <fullName>Putative anthranilate synthase component II</fullName>
        <ecNumber>4.1.3.27</ecNumber>
    </recommendedName>
    <alternativeName>
        <fullName>Glutamine amido-transferase</fullName>
    </alternativeName>
</protein>
<evidence type="ECO:0000255" key="1">
    <source>
        <dbReference type="PROSITE-ProRule" id="PRU00605"/>
    </source>
</evidence>
<dbReference type="EC" id="4.1.3.27"/>
<dbReference type="EMBL" id="L42023">
    <property type="protein sequence ID" value="AAC22824.1"/>
    <property type="molecule type" value="Genomic_DNA"/>
</dbReference>
<dbReference type="PIR" id="G64187">
    <property type="entry name" value="G64187"/>
</dbReference>
<dbReference type="RefSeq" id="NP_439329.1">
    <property type="nucleotide sequence ID" value="NC_000907.1"/>
</dbReference>
<dbReference type="SMR" id="P44339"/>
<dbReference type="STRING" id="71421.HI_1171"/>
<dbReference type="EnsemblBacteria" id="AAC22824">
    <property type="protein sequence ID" value="AAC22824"/>
    <property type="gene ID" value="HI_1171"/>
</dbReference>
<dbReference type="KEGG" id="hin:HI_1171"/>
<dbReference type="PATRIC" id="fig|71421.8.peg.1223"/>
<dbReference type="eggNOG" id="COG0512">
    <property type="taxonomic scope" value="Bacteria"/>
</dbReference>
<dbReference type="HOGENOM" id="CLU_014340_1_2_6"/>
<dbReference type="OrthoDB" id="9786812at2"/>
<dbReference type="PhylomeDB" id="P44339"/>
<dbReference type="BioCyc" id="HINF71421:G1GJ1-1205-MONOMER"/>
<dbReference type="UniPathway" id="UPA00035">
    <property type="reaction ID" value="UER00040"/>
</dbReference>
<dbReference type="Proteomes" id="UP000000579">
    <property type="component" value="Chromosome"/>
</dbReference>
<dbReference type="GO" id="GO:0046820">
    <property type="term" value="F:4-amino-4-deoxychorismate synthase activity"/>
    <property type="evidence" value="ECO:0000318"/>
    <property type="project" value="GO_Central"/>
</dbReference>
<dbReference type="GO" id="GO:0004049">
    <property type="term" value="F:anthranilate synthase activity"/>
    <property type="evidence" value="ECO:0007669"/>
    <property type="project" value="UniProtKB-EC"/>
</dbReference>
<dbReference type="GO" id="GO:0000162">
    <property type="term" value="P:L-tryptophan biosynthetic process"/>
    <property type="evidence" value="ECO:0000318"/>
    <property type="project" value="GO_Central"/>
</dbReference>
<dbReference type="GO" id="GO:0046654">
    <property type="term" value="P:tetrahydrofolate biosynthetic process"/>
    <property type="evidence" value="ECO:0000318"/>
    <property type="project" value="GO_Central"/>
</dbReference>
<dbReference type="CDD" id="cd01743">
    <property type="entry name" value="GATase1_Anthranilate_Synthase"/>
    <property type="match status" value="1"/>
</dbReference>
<dbReference type="FunFam" id="3.40.50.880:FF:000184">
    <property type="entry name" value="Anthranilate synthase component II"/>
    <property type="match status" value="1"/>
</dbReference>
<dbReference type="Gene3D" id="3.40.50.880">
    <property type="match status" value="1"/>
</dbReference>
<dbReference type="InterPro" id="IPR050472">
    <property type="entry name" value="Anth_synth/Amidotransfase"/>
</dbReference>
<dbReference type="InterPro" id="IPR029062">
    <property type="entry name" value="Class_I_gatase-like"/>
</dbReference>
<dbReference type="InterPro" id="IPR017926">
    <property type="entry name" value="GATASE"/>
</dbReference>
<dbReference type="InterPro" id="IPR006221">
    <property type="entry name" value="TrpG/PapA_dom"/>
</dbReference>
<dbReference type="NCBIfam" id="NF005367">
    <property type="entry name" value="PRK06895.1"/>
    <property type="match status" value="1"/>
</dbReference>
<dbReference type="NCBIfam" id="TIGR00566">
    <property type="entry name" value="trpG_papA"/>
    <property type="match status" value="1"/>
</dbReference>
<dbReference type="PANTHER" id="PTHR43418:SF4">
    <property type="entry name" value="MULTIFUNCTIONAL TRYPTOPHAN BIOSYNTHESIS PROTEIN"/>
    <property type="match status" value="1"/>
</dbReference>
<dbReference type="PANTHER" id="PTHR43418">
    <property type="entry name" value="MULTIFUNCTIONAL TRYPTOPHAN BIOSYNTHESIS PROTEIN-RELATED"/>
    <property type="match status" value="1"/>
</dbReference>
<dbReference type="Pfam" id="PF00117">
    <property type="entry name" value="GATase"/>
    <property type="match status" value="1"/>
</dbReference>
<dbReference type="PRINTS" id="PR00097">
    <property type="entry name" value="ANTSNTHASEII"/>
</dbReference>
<dbReference type="PRINTS" id="PR00096">
    <property type="entry name" value="GATASE"/>
</dbReference>
<dbReference type="SUPFAM" id="SSF52317">
    <property type="entry name" value="Class I glutamine amidotransferase-like"/>
    <property type="match status" value="1"/>
</dbReference>
<dbReference type="PROSITE" id="PS51273">
    <property type="entry name" value="GATASE_TYPE_1"/>
    <property type="match status" value="1"/>
</dbReference>
<feature type="chain" id="PRO_0000056879" description="Putative anthranilate synthase component II">
    <location>
        <begin position="1"/>
        <end position="193"/>
    </location>
</feature>
<feature type="domain" description="Glutamine amidotransferase type-1" evidence="1">
    <location>
        <begin position="2"/>
        <end position="193"/>
    </location>
</feature>
<feature type="active site" evidence="1">
    <location>
        <position position="78"/>
    </location>
</feature>
<feature type="active site" evidence="1">
    <location>
        <position position="168"/>
    </location>
</feature>
<feature type="active site" evidence="1">
    <location>
        <position position="170"/>
    </location>
</feature>
<reference key="1">
    <citation type="journal article" date="1995" name="Science">
        <title>Whole-genome random sequencing and assembly of Haemophilus influenzae Rd.</title>
        <authorList>
            <person name="Fleischmann R.D."/>
            <person name="Adams M.D."/>
            <person name="White O."/>
            <person name="Clayton R.A."/>
            <person name="Kirkness E.F."/>
            <person name="Kerlavage A.R."/>
            <person name="Bult C.J."/>
            <person name="Tomb J.-F."/>
            <person name="Dougherty B.A."/>
            <person name="Merrick J.M."/>
            <person name="McKenney K."/>
            <person name="Sutton G.G."/>
            <person name="FitzHugh W."/>
            <person name="Fields C.A."/>
            <person name="Gocayne J.D."/>
            <person name="Scott J.D."/>
            <person name="Shirley R."/>
            <person name="Liu L.-I."/>
            <person name="Glodek A."/>
            <person name="Kelley J.M."/>
            <person name="Weidman J.F."/>
            <person name="Phillips C.A."/>
            <person name="Spriggs T."/>
            <person name="Hedblom E."/>
            <person name="Cotton M.D."/>
            <person name="Utterback T.R."/>
            <person name="Hanna M.C."/>
            <person name="Nguyen D.T."/>
            <person name="Saudek D.M."/>
            <person name="Brandon R.C."/>
            <person name="Fine L.D."/>
            <person name="Fritchman J.L."/>
            <person name="Fuhrmann J.L."/>
            <person name="Geoghagen N.S.M."/>
            <person name="Gnehm C.L."/>
            <person name="McDonald L.A."/>
            <person name="Small K.V."/>
            <person name="Fraser C.M."/>
            <person name="Smith H.O."/>
            <person name="Venter J.C."/>
        </authorList>
    </citation>
    <scope>NUCLEOTIDE SEQUENCE [LARGE SCALE GENOMIC DNA]</scope>
    <source>
        <strain>ATCC 51907 / DSM 11121 / KW20 / Rd</strain>
    </source>
</reference>
<gene>
    <name type="ordered locus">HI_1171</name>
</gene>
<keyword id="KW-0028">Amino-acid biosynthesis</keyword>
<keyword id="KW-0057">Aromatic amino acid biosynthesis</keyword>
<keyword id="KW-0315">Glutamine amidotransferase</keyword>
<keyword id="KW-0456">Lyase</keyword>
<keyword id="KW-1185">Reference proteome</keyword>
<keyword id="KW-0822">Tryptophan biosynthesis</keyword>
<name>Y1171_HAEIN</name>